<dbReference type="EC" id="6.1.1.14" evidence="1"/>
<dbReference type="EMBL" id="AE000783">
    <property type="protein sequence ID" value="AAC66743.1"/>
    <property type="molecule type" value="Genomic_DNA"/>
</dbReference>
<dbReference type="PIR" id="B70146">
    <property type="entry name" value="B70146"/>
</dbReference>
<dbReference type="RefSeq" id="NP_212505.1">
    <property type="nucleotide sequence ID" value="NC_001318.1"/>
</dbReference>
<dbReference type="RefSeq" id="WP_002656113.1">
    <property type="nucleotide sequence ID" value="NC_001318.1"/>
</dbReference>
<dbReference type="SMR" id="O51344"/>
<dbReference type="STRING" id="224326.BB_0371"/>
<dbReference type="PaxDb" id="224326-BB_0371"/>
<dbReference type="EnsemblBacteria" id="AAC66743">
    <property type="protein sequence ID" value="AAC66743"/>
    <property type="gene ID" value="BB_0371"/>
</dbReference>
<dbReference type="KEGG" id="bbu:BB_0371"/>
<dbReference type="PATRIC" id="fig|224326.49.peg.766"/>
<dbReference type="HOGENOM" id="CLU_015515_2_1_12"/>
<dbReference type="OrthoDB" id="9760853at2"/>
<dbReference type="Proteomes" id="UP000001807">
    <property type="component" value="Chromosome"/>
</dbReference>
<dbReference type="GO" id="GO:0005737">
    <property type="term" value="C:cytoplasm"/>
    <property type="evidence" value="ECO:0007669"/>
    <property type="project" value="UniProtKB-SubCell"/>
</dbReference>
<dbReference type="GO" id="GO:0005524">
    <property type="term" value="F:ATP binding"/>
    <property type="evidence" value="ECO:0007669"/>
    <property type="project" value="UniProtKB-UniRule"/>
</dbReference>
<dbReference type="GO" id="GO:0004820">
    <property type="term" value="F:glycine-tRNA ligase activity"/>
    <property type="evidence" value="ECO:0000250"/>
    <property type="project" value="UniProtKB"/>
</dbReference>
<dbReference type="GO" id="GO:0046983">
    <property type="term" value="F:protein dimerization activity"/>
    <property type="evidence" value="ECO:0000250"/>
    <property type="project" value="UniProtKB"/>
</dbReference>
<dbReference type="GO" id="GO:0006426">
    <property type="term" value="P:glycyl-tRNA aminoacylation"/>
    <property type="evidence" value="ECO:0007669"/>
    <property type="project" value="UniProtKB-UniRule"/>
</dbReference>
<dbReference type="CDD" id="cd00774">
    <property type="entry name" value="GlyRS-like_core"/>
    <property type="match status" value="1"/>
</dbReference>
<dbReference type="CDD" id="cd00858">
    <property type="entry name" value="GlyRS_anticodon"/>
    <property type="match status" value="1"/>
</dbReference>
<dbReference type="FunFam" id="3.30.930.10:FF:000014">
    <property type="entry name" value="Glycine--tRNA ligase"/>
    <property type="match status" value="1"/>
</dbReference>
<dbReference type="FunFam" id="3.40.50.800:FF:000002">
    <property type="entry name" value="Glycine--tRNA ligase"/>
    <property type="match status" value="1"/>
</dbReference>
<dbReference type="Gene3D" id="3.40.50.800">
    <property type="entry name" value="Anticodon-binding domain"/>
    <property type="match status" value="1"/>
</dbReference>
<dbReference type="Gene3D" id="3.30.930.10">
    <property type="entry name" value="Bira Bifunctional Protein, Domain 2"/>
    <property type="match status" value="1"/>
</dbReference>
<dbReference type="HAMAP" id="MF_00253_B">
    <property type="entry name" value="Gly_tRNA_synth_B"/>
    <property type="match status" value="1"/>
</dbReference>
<dbReference type="InterPro" id="IPR002314">
    <property type="entry name" value="aa-tRNA-synt_IIb"/>
</dbReference>
<dbReference type="InterPro" id="IPR006195">
    <property type="entry name" value="aa-tRNA-synth_II"/>
</dbReference>
<dbReference type="InterPro" id="IPR045864">
    <property type="entry name" value="aa-tRNA-synth_II/BPL/LPL"/>
</dbReference>
<dbReference type="InterPro" id="IPR004154">
    <property type="entry name" value="Anticodon-bd"/>
</dbReference>
<dbReference type="InterPro" id="IPR036621">
    <property type="entry name" value="Anticodon-bd_dom_sf"/>
</dbReference>
<dbReference type="InterPro" id="IPR027031">
    <property type="entry name" value="Gly-tRNA_synthase/POLG2"/>
</dbReference>
<dbReference type="InterPro" id="IPR022961">
    <property type="entry name" value="Gly_tRNA_ligase_bac"/>
</dbReference>
<dbReference type="InterPro" id="IPR033731">
    <property type="entry name" value="GlyRS-like_core"/>
</dbReference>
<dbReference type="InterPro" id="IPR002315">
    <property type="entry name" value="tRNA-synt_gly"/>
</dbReference>
<dbReference type="NCBIfam" id="TIGR00389">
    <property type="entry name" value="glyS_dimeric"/>
    <property type="match status" value="1"/>
</dbReference>
<dbReference type="NCBIfam" id="NF003211">
    <property type="entry name" value="PRK04173.1"/>
    <property type="match status" value="1"/>
</dbReference>
<dbReference type="PANTHER" id="PTHR10745:SF8">
    <property type="entry name" value="DNA POLYMERASE SUBUNIT GAMMA-2, MITOCHONDRIAL"/>
    <property type="match status" value="1"/>
</dbReference>
<dbReference type="PANTHER" id="PTHR10745">
    <property type="entry name" value="GLYCYL-TRNA SYNTHETASE/DNA POLYMERASE SUBUNIT GAMMA-2"/>
    <property type="match status" value="1"/>
</dbReference>
<dbReference type="Pfam" id="PF03129">
    <property type="entry name" value="HGTP_anticodon"/>
    <property type="match status" value="1"/>
</dbReference>
<dbReference type="Pfam" id="PF00587">
    <property type="entry name" value="tRNA-synt_2b"/>
    <property type="match status" value="1"/>
</dbReference>
<dbReference type="PRINTS" id="PR01043">
    <property type="entry name" value="TRNASYNTHGLY"/>
</dbReference>
<dbReference type="SUPFAM" id="SSF52954">
    <property type="entry name" value="Class II aaRS ABD-related"/>
    <property type="match status" value="1"/>
</dbReference>
<dbReference type="SUPFAM" id="SSF55681">
    <property type="entry name" value="Class II aaRS and biotin synthetases"/>
    <property type="match status" value="1"/>
</dbReference>
<dbReference type="PROSITE" id="PS50862">
    <property type="entry name" value="AA_TRNA_LIGASE_II"/>
    <property type="match status" value="1"/>
</dbReference>
<name>SYG_BORBU</name>
<protein>
    <recommendedName>
        <fullName evidence="1">Glycine--tRNA ligase</fullName>
        <ecNumber evidence="1">6.1.1.14</ecNumber>
    </recommendedName>
    <alternativeName>
        <fullName evidence="1">Glycyl-tRNA synthetase</fullName>
        <shortName evidence="1">GlyRS</shortName>
    </alternativeName>
</protein>
<comment type="function">
    <text evidence="1">Catalyzes the attachment of glycine to tRNA(Gly).</text>
</comment>
<comment type="catalytic activity">
    <reaction evidence="1">
        <text>tRNA(Gly) + glycine + ATP = glycyl-tRNA(Gly) + AMP + diphosphate</text>
        <dbReference type="Rhea" id="RHEA:16013"/>
        <dbReference type="Rhea" id="RHEA-COMP:9664"/>
        <dbReference type="Rhea" id="RHEA-COMP:9683"/>
        <dbReference type="ChEBI" id="CHEBI:30616"/>
        <dbReference type="ChEBI" id="CHEBI:33019"/>
        <dbReference type="ChEBI" id="CHEBI:57305"/>
        <dbReference type="ChEBI" id="CHEBI:78442"/>
        <dbReference type="ChEBI" id="CHEBI:78522"/>
        <dbReference type="ChEBI" id="CHEBI:456215"/>
        <dbReference type="EC" id="6.1.1.14"/>
    </reaction>
</comment>
<comment type="subunit">
    <text evidence="1">Homodimer.</text>
</comment>
<comment type="subcellular location">
    <subcellularLocation>
        <location evidence="1">Cytoplasm</location>
    </subcellularLocation>
</comment>
<comment type="similarity">
    <text evidence="1">Belongs to the class-II aminoacyl-tRNA synthetase family.</text>
</comment>
<sequence length="445" mass="52210">MVRMEDIISLAKRKGFVFQSSEVYGGLSGAWDYGPLGVELKKNIKKEWWKSMVYLHENIVGLDSAIFMRPEIWRASGHVDGFSDSMVDCKDCKSRFRADFIDLSKNCPNCKVGNNFTSPRSFNLMFKTHIGVVEDSSSEVYLRPETAQGIFVNFRNVLDSSRLKIPFGIAQVGKAFRNEIVTKNFIFRTCEFEQMEMQFFVHPKQIDEWFCYWQQNRMNFFIETLKISPDRLRFKAHDSTQLAHYAKAAFDIEYEFPFGFQEVEGIHNRGNYDLTQHAKFSNKPKVFEYHDLLTKEKYVPYVIETSAGLTRSVLMTLCDAYSEEELSDGDKRIVLRLHPKLAPYKIAIFPLVKKVELTEIARRIYMELCDDFHIFYDDSGTIGKRYRRQDEIGTPYCVTIDYNTIEDETVTVRERNSMTQKRIFINDLYSYIKTEILNYKEDFNK</sequence>
<evidence type="ECO:0000255" key="1">
    <source>
        <dbReference type="HAMAP-Rule" id="MF_00253"/>
    </source>
</evidence>
<keyword id="KW-0030">Aminoacyl-tRNA synthetase</keyword>
<keyword id="KW-0067">ATP-binding</keyword>
<keyword id="KW-0963">Cytoplasm</keyword>
<keyword id="KW-0436">Ligase</keyword>
<keyword id="KW-0547">Nucleotide-binding</keyword>
<keyword id="KW-0648">Protein biosynthesis</keyword>
<keyword id="KW-1185">Reference proteome</keyword>
<organism>
    <name type="scientific">Borreliella burgdorferi (strain ATCC 35210 / DSM 4680 / CIP 102532 / B31)</name>
    <name type="common">Borrelia burgdorferi</name>
    <dbReference type="NCBI Taxonomy" id="224326"/>
    <lineage>
        <taxon>Bacteria</taxon>
        <taxon>Pseudomonadati</taxon>
        <taxon>Spirochaetota</taxon>
        <taxon>Spirochaetia</taxon>
        <taxon>Spirochaetales</taxon>
        <taxon>Borreliaceae</taxon>
        <taxon>Borreliella</taxon>
    </lineage>
</organism>
<reference key="1">
    <citation type="journal article" date="1997" name="Nature">
        <title>Genomic sequence of a Lyme disease spirochaete, Borrelia burgdorferi.</title>
        <authorList>
            <person name="Fraser C.M."/>
            <person name="Casjens S."/>
            <person name="Huang W.M."/>
            <person name="Sutton G.G."/>
            <person name="Clayton R.A."/>
            <person name="Lathigra R."/>
            <person name="White O."/>
            <person name="Ketchum K.A."/>
            <person name="Dodson R.J."/>
            <person name="Hickey E.K."/>
            <person name="Gwinn M.L."/>
            <person name="Dougherty B.A."/>
            <person name="Tomb J.-F."/>
            <person name="Fleischmann R.D."/>
            <person name="Richardson D.L."/>
            <person name="Peterson J.D."/>
            <person name="Kerlavage A.R."/>
            <person name="Quackenbush J."/>
            <person name="Salzberg S.L."/>
            <person name="Hanson M."/>
            <person name="van Vugt R."/>
            <person name="Palmer N."/>
            <person name="Adams M.D."/>
            <person name="Gocayne J.D."/>
            <person name="Weidman J.F."/>
            <person name="Utterback T.R."/>
            <person name="Watthey L."/>
            <person name="McDonald L.A."/>
            <person name="Artiach P."/>
            <person name="Bowman C."/>
            <person name="Garland S.A."/>
            <person name="Fujii C."/>
            <person name="Cotton M.D."/>
            <person name="Horst K."/>
            <person name="Roberts K.M."/>
            <person name="Hatch B."/>
            <person name="Smith H.O."/>
            <person name="Venter J.C."/>
        </authorList>
    </citation>
    <scope>NUCLEOTIDE SEQUENCE [LARGE SCALE GENOMIC DNA]</scope>
    <source>
        <strain>ATCC 35210 / DSM 4680 / CIP 102532 / B31</strain>
    </source>
</reference>
<feature type="chain" id="PRO_0000072949" description="Glycine--tRNA ligase">
    <location>
        <begin position="1"/>
        <end position="445"/>
    </location>
</feature>
<feature type="binding site" evidence="1">
    <location>
        <position position="97"/>
    </location>
    <ligand>
        <name>substrate</name>
    </ligand>
</feature>
<feature type="binding site" evidence="1">
    <location>
        <position position="145"/>
    </location>
    <ligand>
        <name>substrate</name>
    </ligand>
</feature>
<feature type="binding site" evidence="1">
    <location>
        <begin position="177"/>
        <end position="179"/>
    </location>
    <ligand>
        <name>ATP</name>
        <dbReference type="ChEBI" id="CHEBI:30616"/>
    </ligand>
</feature>
<feature type="binding site" evidence="1">
    <location>
        <begin position="187"/>
        <end position="192"/>
    </location>
    <ligand>
        <name>ATP</name>
        <dbReference type="ChEBI" id="CHEBI:30616"/>
    </ligand>
</feature>
<feature type="binding site" evidence="1">
    <location>
        <begin position="192"/>
        <end position="196"/>
    </location>
    <ligand>
        <name>substrate</name>
    </ligand>
</feature>
<feature type="binding site" evidence="1">
    <location>
        <begin position="262"/>
        <end position="263"/>
    </location>
    <ligand>
        <name>ATP</name>
        <dbReference type="ChEBI" id="CHEBI:30616"/>
    </ligand>
</feature>
<feature type="binding site" evidence="1">
    <location>
        <begin position="304"/>
        <end position="308"/>
    </location>
    <ligand>
        <name>substrate</name>
    </ligand>
</feature>
<feature type="binding site" evidence="1">
    <location>
        <begin position="308"/>
        <end position="311"/>
    </location>
    <ligand>
        <name>ATP</name>
        <dbReference type="ChEBI" id="CHEBI:30616"/>
    </ligand>
</feature>
<gene>
    <name evidence="1" type="primary">glyQS</name>
    <name type="synonym">glyS</name>
    <name type="ordered locus">BB_0371</name>
</gene>
<proteinExistence type="inferred from homology"/>
<accession>O51344</accession>